<dbReference type="EMBL" id="AE005174">
    <property type="protein sequence ID" value="AAG58441.1"/>
    <property type="molecule type" value="Genomic_DNA"/>
</dbReference>
<dbReference type="EMBL" id="BA000007">
    <property type="protein sequence ID" value="BAB37608.1"/>
    <property type="molecule type" value="Genomic_DNA"/>
</dbReference>
<dbReference type="PIR" id="A91152">
    <property type="entry name" value="A91152"/>
</dbReference>
<dbReference type="PIR" id="E85997">
    <property type="entry name" value="E85997"/>
</dbReference>
<dbReference type="RefSeq" id="NP_312212.1">
    <property type="nucleotide sequence ID" value="NC_002695.1"/>
</dbReference>
<dbReference type="RefSeq" id="WP_000579833.1">
    <property type="nucleotide sequence ID" value="NZ_VOAI01000041.1"/>
</dbReference>
<dbReference type="SMR" id="P60440"/>
<dbReference type="STRING" id="155864.Z4691"/>
<dbReference type="GeneID" id="86948184"/>
<dbReference type="GeneID" id="915962"/>
<dbReference type="KEGG" id="ece:Z4691"/>
<dbReference type="KEGG" id="ecs:ECs_4185"/>
<dbReference type="PATRIC" id="fig|386585.9.peg.4368"/>
<dbReference type="eggNOG" id="COG0087">
    <property type="taxonomic scope" value="Bacteria"/>
</dbReference>
<dbReference type="HOGENOM" id="CLU_044142_4_1_6"/>
<dbReference type="OMA" id="GKNIPCT"/>
<dbReference type="Proteomes" id="UP000000558">
    <property type="component" value="Chromosome"/>
</dbReference>
<dbReference type="Proteomes" id="UP000002519">
    <property type="component" value="Chromosome"/>
</dbReference>
<dbReference type="GO" id="GO:0022625">
    <property type="term" value="C:cytosolic large ribosomal subunit"/>
    <property type="evidence" value="ECO:0007669"/>
    <property type="project" value="TreeGrafter"/>
</dbReference>
<dbReference type="GO" id="GO:0019843">
    <property type="term" value="F:rRNA binding"/>
    <property type="evidence" value="ECO:0007669"/>
    <property type="project" value="UniProtKB-UniRule"/>
</dbReference>
<dbReference type="GO" id="GO:0003735">
    <property type="term" value="F:structural constituent of ribosome"/>
    <property type="evidence" value="ECO:0007669"/>
    <property type="project" value="InterPro"/>
</dbReference>
<dbReference type="GO" id="GO:0006412">
    <property type="term" value="P:translation"/>
    <property type="evidence" value="ECO:0007669"/>
    <property type="project" value="UniProtKB-UniRule"/>
</dbReference>
<dbReference type="FunFam" id="2.40.30.10:FF:000004">
    <property type="entry name" value="50S ribosomal protein L3"/>
    <property type="match status" value="1"/>
</dbReference>
<dbReference type="FunFam" id="3.30.160.810:FF:000001">
    <property type="entry name" value="50S ribosomal protein L3"/>
    <property type="match status" value="1"/>
</dbReference>
<dbReference type="Gene3D" id="3.30.160.810">
    <property type="match status" value="1"/>
</dbReference>
<dbReference type="Gene3D" id="2.40.30.10">
    <property type="entry name" value="Translation factors"/>
    <property type="match status" value="1"/>
</dbReference>
<dbReference type="HAMAP" id="MF_01325_B">
    <property type="entry name" value="Ribosomal_uL3_B"/>
    <property type="match status" value="1"/>
</dbReference>
<dbReference type="InterPro" id="IPR000597">
    <property type="entry name" value="Ribosomal_uL3"/>
</dbReference>
<dbReference type="InterPro" id="IPR019927">
    <property type="entry name" value="Ribosomal_uL3_bac/org-type"/>
</dbReference>
<dbReference type="InterPro" id="IPR019926">
    <property type="entry name" value="Ribosomal_uL3_CS"/>
</dbReference>
<dbReference type="InterPro" id="IPR009000">
    <property type="entry name" value="Transl_B-barrel_sf"/>
</dbReference>
<dbReference type="NCBIfam" id="TIGR03625">
    <property type="entry name" value="L3_bact"/>
    <property type="match status" value="1"/>
</dbReference>
<dbReference type="PANTHER" id="PTHR11229">
    <property type="entry name" value="50S RIBOSOMAL PROTEIN L3"/>
    <property type="match status" value="1"/>
</dbReference>
<dbReference type="PANTHER" id="PTHR11229:SF16">
    <property type="entry name" value="LARGE RIBOSOMAL SUBUNIT PROTEIN UL3C"/>
    <property type="match status" value="1"/>
</dbReference>
<dbReference type="Pfam" id="PF00297">
    <property type="entry name" value="Ribosomal_L3"/>
    <property type="match status" value="1"/>
</dbReference>
<dbReference type="SUPFAM" id="SSF50447">
    <property type="entry name" value="Translation proteins"/>
    <property type="match status" value="1"/>
</dbReference>
<dbReference type="PROSITE" id="PS00474">
    <property type="entry name" value="RIBOSOMAL_L3"/>
    <property type="match status" value="1"/>
</dbReference>
<comment type="function">
    <text evidence="1">One of the primary rRNA binding proteins, it binds directly near the 3'-end of the 23S rRNA, where it nucleates assembly of the 50S subunit.</text>
</comment>
<comment type="subunit">
    <text evidence="1">Part of the 50S ribosomal subunit. Forms a cluster with proteins L14 and L19.</text>
</comment>
<comment type="PTM">
    <text evidence="1">Methylated by PrmB.</text>
</comment>
<comment type="similarity">
    <text evidence="1">Belongs to the universal ribosomal protein uL3 family.</text>
</comment>
<keyword id="KW-0488">Methylation</keyword>
<keyword id="KW-1185">Reference proteome</keyword>
<keyword id="KW-0687">Ribonucleoprotein</keyword>
<keyword id="KW-0689">Ribosomal protein</keyword>
<keyword id="KW-0694">RNA-binding</keyword>
<keyword id="KW-0699">rRNA-binding</keyword>
<protein>
    <recommendedName>
        <fullName evidence="1">Large ribosomal subunit protein uL3</fullName>
    </recommendedName>
    <alternativeName>
        <fullName evidence="2">50S ribosomal protein L3</fullName>
    </alternativeName>
</protein>
<proteinExistence type="inferred from homology"/>
<sequence>MIGLVGKKVGMTRIFTEDGVSIPVTVIEVEANRVTQVKDLANDGYRAIQVTTGAKKANRVTKPEAGHFAKAGVEAGRGLWEFRLAEGEEFTVGQSISVELFADVKKVDVTGTSKGKGFAGTVKRWNFRTQDATHGNSLSHRVPGSIGQNQTPGKVFKGKKMAGQMGNERVTVQSLDVVRVDAERNLLLVKGAVPGATGSDLIVKPAVKA</sequence>
<feature type="chain" id="PRO_0000077100" description="Large ribosomal subunit protein uL3">
    <location>
        <begin position="1"/>
        <end position="209"/>
    </location>
</feature>
<feature type="modified residue" description="N5-methylglutamine" evidence="1">
    <location>
        <position position="150"/>
    </location>
</feature>
<name>RL3_ECO57</name>
<evidence type="ECO:0000255" key="1">
    <source>
        <dbReference type="HAMAP-Rule" id="MF_01325"/>
    </source>
</evidence>
<evidence type="ECO:0000305" key="2"/>
<accession>P60440</accession>
<accession>P02386</accession>
<gene>
    <name evidence="1" type="primary">rplC</name>
    <name type="ordered locus">Z4691</name>
    <name type="ordered locus">ECs4185</name>
</gene>
<organism>
    <name type="scientific">Escherichia coli O157:H7</name>
    <dbReference type="NCBI Taxonomy" id="83334"/>
    <lineage>
        <taxon>Bacteria</taxon>
        <taxon>Pseudomonadati</taxon>
        <taxon>Pseudomonadota</taxon>
        <taxon>Gammaproteobacteria</taxon>
        <taxon>Enterobacterales</taxon>
        <taxon>Enterobacteriaceae</taxon>
        <taxon>Escherichia</taxon>
    </lineage>
</organism>
<reference key="1">
    <citation type="journal article" date="2001" name="Nature">
        <title>Genome sequence of enterohaemorrhagic Escherichia coli O157:H7.</title>
        <authorList>
            <person name="Perna N.T."/>
            <person name="Plunkett G. III"/>
            <person name="Burland V."/>
            <person name="Mau B."/>
            <person name="Glasner J.D."/>
            <person name="Rose D.J."/>
            <person name="Mayhew G.F."/>
            <person name="Evans P.S."/>
            <person name="Gregor J."/>
            <person name="Kirkpatrick H.A."/>
            <person name="Posfai G."/>
            <person name="Hackett J."/>
            <person name="Klink S."/>
            <person name="Boutin A."/>
            <person name="Shao Y."/>
            <person name="Miller L."/>
            <person name="Grotbeck E.J."/>
            <person name="Davis N.W."/>
            <person name="Lim A."/>
            <person name="Dimalanta E.T."/>
            <person name="Potamousis K."/>
            <person name="Apodaca J."/>
            <person name="Anantharaman T.S."/>
            <person name="Lin J."/>
            <person name="Yen G."/>
            <person name="Schwartz D.C."/>
            <person name="Welch R.A."/>
            <person name="Blattner F.R."/>
        </authorList>
    </citation>
    <scope>NUCLEOTIDE SEQUENCE [LARGE SCALE GENOMIC DNA]</scope>
    <source>
        <strain>O157:H7 / EDL933 / ATCC 700927 / EHEC</strain>
    </source>
</reference>
<reference key="2">
    <citation type="journal article" date="2001" name="DNA Res.">
        <title>Complete genome sequence of enterohemorrhagic Escherichia coli O157:H7 and genomic comparison with a laboratory strain K-12.</title>
        <authorList>
            <person name="Hayashi T."/>
            <person name="Makino K."/>
            <person name="Ohnishi M."/>
            <person name="Kurokawa K."/>
            <person name="Ishii K."/>
            <person name="Yokoyama K."/>
            <person name="Han C.-G."/>
            <person name="Ohtsubo E."/>
            <person name="Nakayama K."/>
            <person name="Murata T."/>
            <person name="Tanaka M."/>
            <person name="Tobe T."/>
            <person name="Iida T."/>
            <person name="Takami H."/>
            <person name="Honda T."/>
            <person name="Sasakawa C."/>
            <person name="Ogasawara N."/>
            <person name="Yasunaga T."/>
            <person name="Kuhara S."/>
            <person name="Shiba T."/>
            <person name="Hattori M."/>
            <person name="Shinagawa H."/>
        </authorList>
    </citation>
    <scope>NUCLEOTIDE SEQUENCE [LARGE SCALE GENOMIC DNA]</scope>
    <source>
        <strain>O157:H7 / Sakai / RIMD 0509952 / EHEC</strain>
    </source>
</reference>